<dbReference type="EMBL" id="M77237">
    <property type="protein sequence ID" value="AAA24433.1"/>
    <property type="molecule type" value="Genomic_DNA"/>
</dbReference>
<dbReference type="EMBL" id="D10264">
    <property type="protein sequence ID" value="BAA01105.1"/>
    <property type="molecule type" value="Genomic_DNA"/>
</dbReference>
<dbReference type="EMBL" id="U18555">
    <property type="protein sequence ID" value="AAC43435.1"/>
    <property type="molecule type" value="Genomic_DNA"/>
</dbReference>
<dbReference type="EMBL" id="U00096">
    <property type="protein sequence ID" value="AAC74293.1"/>
    <property type="molecule type" value="Genomic_DNA"/>
</dbReference>
<dbReference type="EMBL" id="AP009048">
    <property type="protein sequence ID" value="BAA36067.1"/>
    <property type="molecule type" value="Genomic_DNA"/>
</dbReference>
<dbReference type="PIR" id="A47706">
    <property type="entry name" value="A47706"/>
</dbReference>
<dbReference type="RefSeq" id="NP_415727.1">
    <property type="nucleotide sequence ID" value="NC_000913.3"/>
</dbReference>
<dbReference type="RefSeq" id="WP_001130692.1">
    <property type="nucleotide sequence ID" value="NZ_SSZK01000010.1"/>
</dbReference>
<dbReference type="PDB" id="1IWM">
    <property type="method" value="X-ray"/>
    <property type="resolution" value="1.90 A"/>
    <property type="chains" value="A/B=22-207"/>
</dbReference>
<dbReference type="PDB" id="1IWN">
    <property type="method" value="X-ray"/>
    <property type="resolution" value="2.20 A"/>
    <property type="chains" value="A=22-207"/>
</dbReference>
<dbReference type="PDBsum" id="1IWM"/>
<dbReference type="PDBsum" id="1IWN"/>
<dbReference type="SMR" id="P61320"/>
<dbReference type="BioGRID" id="4260814">
    <property type="interactions" value="308"/>
</dbReference>
<dbReference type="DIP" id="DIP-35933N"/>
<dbReference type="FunCoup" id="P61320">
    <property type="interactions" value="131"/>
</dbReference>
<dbReference type="IntAct" id="P61320">
    <property type="interactions" value="9"/>
</dbReference>
<dbReference type="MINT" id="P61320"/>
<dbReference type="STRING" id="511145.b1209"/>
<dbReference type="DrugBank" id="DB02078">
    <property type="generic name" value="Triglyme"/>
</dbReference>
<dbReference type="TCDB" id="1.B.46.1.1">
    <property type="family name" value="the outer membrane lolab lipoprotein insertion apparatus (lolab) family"/>
</dbReference>
<dbReference type="jPOST" id="P61320"/>
<dbReference type="PaxDb" id="511145-b1209"/>
<dbReference type="EnsemblBacteria" id="AAC74293">
    <property type="protein sequence ID" value="AAC74293"/>
    <property type="gene ID" value="b1209"/>
</dbReference>
<dbReference type="GeneID" id="93775274"/>
<dbReference type="GeneID" id="945775"/>
<dbReference type="KEGG" id="ecj:JW1200"/>
<dbReference type="KEGG" id="eco:b1209"/>
<dbReference type="KEGG" id="ecoc:C3026_07105"/>
<dbReference type="PATRIC" id="fig|1411691.4.peg.1075"/>
<dbReference type="EchoBASE" id="EB1270"/>
<dbReference type="eggNOG" id="COG3017">
    <property type="taxonomic scope" value="Bacteria"/>
</dbReference>
<dbReference type="HOGENOM" id="CLU_092816_1_1_6"/>
<dbReference type="InParanoid" id="P61320"/>
<dbReference type="OMA" id="FSSRFEW"/>
<dbReference type="OrthoDB" id="9797618at2"/>
<dbReference type="PhylomeDB" id="P61320"/>
<dbReference type="BioCyc" id="EcoCyc:EG11293-MONOMER"/>
<dbReference type="BioCyc" id="MetaCyc:EG11293-MONOMER"/>
<dbReference type="EvolutionaryTrace" id="P61320"/>
<dbReference type="PRO" id="PR:P61320"/>
<dbReference type="Proteomes" id="UP000000625">
    <property type="component" value="Chromosome"/>
</dbReference>
<dbReference type="GO" id="GO:0009279">
    <property type="term" value="C:cell outer membrane"/>
    <property type="evidence" value="ECO:0007669"/>
    <property type="project" value="UniProtKB-SubCell"/>
</dbReference>
<dbReference type="GO" id="GO:0030288">
    <property type="term" value="C:outer membrane-bounded periplasmic space"/>
    <property type="evidence" value="ECO:0000314"/>
    <property type="project" value="EcoCyc"/>
</dbReference>
<dbReference type="GO" id="GO:0044874">
    <property type="term" value="P:lipoprotein localization to outer membrane"/>
    <property type="evidence" value="ECO:0000314"/>
    <property type="project" value="CACAO"/>
</dbReference>
<dbReference type="GO" id="GO:0042157">
    <property type="term" value="P:lipoprotein metabolic process"/>
    <property type="evidence" value="ECO:0000315"/>
    <property type="project" value="EcoCyc"/>
</dbReference>
<dbReference type="GO" id="GO:0015031">
    <property type="term" value="P:protein transport"/>
    <property type="evidence" value="ECO:0007669"/>
    <property type="project" value="UniProtKB-KW"/>
</dbReference>
<dbReference type="CDD" id="cd16326">
    <property type="entry name" value="LolB"/>
    <property type="match status" value="1"/>
</dbReference>
<dbReference type="FunFam" id="2.50.20.10:FF:000002">
    <property type="entry name" value="Outer-membrane lipoprotein LolB"/>
    <property type="match status" value="1"/>
</dbReference>
<dbReference type="Gene3D" id="2.50.20.10">
    <property type="entry name" value="Lipoprotein localisation LolA/LolB/LppX"/>
    <property type="match status" value="1"/>
</dbReference>
<dbReference type="HAMAP" id="MF_00233">
    <property type="entry name" value="LolB"/>
    <property type="match status" value="1"/>
</dbReference>
<dbReference type="InterPro" id="IPR029046">
    <property type="entry name" value="LolA/LolB/LppX"/>
</dbReference>
<dbReference type="InterPro" id="IPR004565">
    <property type="entry name" value="OM_lipoprot_LolB"/>
</dbReference>
<dbReference type="NCBIfam" id="TIGR00548">
    <property type="entry name" value="lolB"/>
    <property type="match status" value="1"/>
</dbReference>
<dbReference type="Pfam" id="PF03550">
    <property type="entry name" value="LolB"/>
    <property type="match status" value="1"/>
</dbReference>
<dbReference type="SUPFAM" id="SSF89392">
    <property type="entry name" value="Prokaryotic lipoproteins and lipoprotein localization factors"/>
    <property type="match status" value="1"/>
</dbReference>
<dbReference type="PROSITE" id="PS51257">
    <property type="entry name" value="PROKAR_LIPOPROTEIN"/>
    <property type="match status" value="1"/>
</dbReference>
<organism>
    <name type="scientific">Escherichia coli (strain K12)</name>
    <dbReference type="NCBI Taxonomy" id="83333"/>
    <lineage>
        <taxon>Bacteria</taxon>
        <taxon>Pseudomonadati</taxon>
        <taxon>Pseudomonadota</taxon>
        <taxon>Gammaproteobacteria</taxon>
        <taxon>Enterobacterales</taxon>
        <taxon>Enterobacteriaceae</taxon>
        <taxon>Escherichia</taxon>
    </lineage>
</organism>
<feature type="signal peptide">
    <location>
        <begin position="1"/>
        <end position="21"/>
    </location>
</feature>
<feature type="chain" id="PRO_0000018296" description="Outer-membrane lipoprotein LolB">
    <location>
        <begin position="22"/>
        <end position="207"/>
    </location>
</feature>
<feature type="lipid moiety-binding region" description="N-palmitoyl cysteine" evidence="1">
    <location>
        <position position="22"/>
    </location>
</feature>
<feature type="lipid moiety-binding region" description="S-diacylglycerol cysteine" evidence="4">
    <location>
        <position position="22"/>
    </location>
</feature>
<feature type="sequence conflict" description="In Ref. 1; BAA01105." evidence="2" ref="1">
    <original>L</original>
    <variation>V</variation>
    <location>
        <position position="12"/>
    </location>
</feature>
<feature type="sequence conflict" description="In Ref. 3; AAC43435." evidence="2" ref="3">
    <original>QH</original>
    <variation>HD</variation>
    <location>
        <begin position="41"/>
        <end position="42"/>
    </location>
</feature>
<feature type="sequence conflict" description="In Ref. 3; AAC43435." evidence="2" ref="3">
    <original>YDTKTQPAMPANMELTDGGQRIKLKMDNWIVK</original>
    <variation>MTPKRNLRCQPIWNSPTVVNASS</variation>
    <location>
        <begin position="176"/>
        <end position="207"/>
    </location>
</feature>
<feature type="strand" evidence="5">
    <location>
        <begin position="34"/>
        <end position="36"/>
    </location>
</feature>
<feature type="helix" evidence="5">
    <location>
        <begin position="37"/>
        <end position="47"/>
    </location>
</feature>
<feature type="strand" evidence="5">
    <location>
        <begin position="51"/>
        <end position="61"/>
    </location>
</feature>
<feature type="strand" evidence="5">
    <location>
        <begin position="66"/>
        <end position="76"/>
    </location>
</feature>
<feature type="turn" evidence="5">
    <location>
        <begin position="77"/>
        <end position="79"/>
    </location>
</feature>
<feature type="strand" evidence="5">
    <location>
        <begin position="80"/>
        <end position="86"/>
    </location>
</feature>
<feature type="strand" evidence="5">
    <location>
        <begin position="92"/>
        <end position="99"/>
    </location>
</feature>
<feature type="strand" evidence="5">
    <location>
        <begin position="102"/>
        <end position="106"/>
    </location>
</feature>
<feature type="strand" evidence="5">
    <location>
        <begin position="112"/>
        <end position="116"/>
    </location>
</feature>
<feature type="helix" evidence="5">
    <location>
        <begin position="118"/>
        <end position="126"/>
    </location>
</feature>
<feature type="helix" evidence="5">
    <location>
        <begin position="132"/>
        <end position="138"/>
    </location>
</feature>
<feature type="turn" evidence="5">
    <location>
        <begin position="139"/>
        <end position="141"/>
    </location>
</feature>
<feature type="strand" evidence="5">
    <location>
        <begin position="149"/>
        <end position="151"/>
    </location>
</feature>
<feature type="strand" evidence="5">
    <location>
        <begin position="157"/>
        <end position="166"/>
    </location>
</feature>
<feature type="strand" evidence="5">
    <location>
        <begin position="168"/>
        <end position="173"/>
    </location>
</feature>
<feature type="strand" evidence="5">
    <location>
        <begin position="180"/>
        <end position="182"/>
    </location>
</feature>
<feature type="strand" evidence="5">
    <location>
        <begin position="187"/>
        <end position="191"/>
    </location>
</feature>
<feature type="strand" evidence="5">
    <location>
        <begin position="196"/>
        <end position="207"/>
    </location>
</feature>
<protein>
    <recommendedName>
        <fullName>Outer-membrane lipoprotein LolB</fullName>
    </recommendedName>
</protein>
<gene>
    <name type="primary">lolB</name>
    <name type="synonym">hemM</name>
    <name type="synonym">ychC</name>
    <name type="ordered locus">b1209</name>
    <name type="ordered locus">JW1200</name>
</gene>
<reference key="1">
    <citation type="journal article" date="1992" name="Gene">
        <title>Cloning and characterization of genes involved in the biosynthesis of delta-aminolevulinic acid in Escherichia coli.</title>
        <authorList>
            <person name="Ikemi M."/>
            <person name="Murakami K."/>
            <person name="Hashimoto M."/>
            <person name="Murooka Y."/>
        </authorList>
    </citation>
    <scope>NUCLEOTIDE SEQUENCE [GENOMIC DNA]</scope>
</reference>
<reference key="2">
    <citation type="journal article" date="1993" name="J. Gen. Microbiol.">
        <title>Characterization of the hemA-prs region of the Escherichia coli and Salmonella typhimurium chromosomes: identification of two open reading frames and implications for prs expression.</title>
        <authorList>
            <person name="Post D.A."/>
            <person name="Hove-Jensen B."/>
            <person name="Switzer R.L."/>
        </authorList>
    </citation>
    <scope>NUCLEOTIDE SEQUENCE [GENOMIC DNA]</scope>
    <source>
        <strain>K12</strain>
    </source>
</reference>
<reference key="3">
    <citation type="journal article" date="1995" name="J. Bacteriol.">
        <title>Expression of genes kdsA and kdsB involved in 3-deoxy-D-manno-octulosonic acid metabolism and biosynthesis of enterobacterial lipopolysaccharide is growth phase regulated primarily at the transcriptional level in Escherichia coli K-12.</title>
        <authorList>
            <person name="Strohmaier H."/>
            <person name="Remler P."/>
            <person name="Renner W."/>
            <person name="Hoegenauer G."/>
        </authorList>
    </citation>
    <scope>NUCLEOTIDE SEQUENCE [GENOMIC DNA]</scope>
    <source>
        <strain>K12</strain>
    </source>
</reference>
<reference key="4">
    <citation type="journal article" date="1996" name="DNA Res.">
        <title>A 718-kb DNA sequence of the Escherichia coli K-12 genome corresponding to the 12.7-28.0 min region on the linkage map.</title>
        <authorList>
            <person name="Oshima T."/>
            <person name="Aiba H."/>
            <person name="Baba T."/>
            <person name="Fujita K."/>
            <person name="Hayashi K."/>
            <person name="Honjo A."/>
            <person name="Ikemoto K."/>
            <person name="Inada T."/>
            <person name="Itoh T."/>
            <person name="Kajihara M."/>
            <person name="Kanai K."/>
            <person name="Kashimoto K."/>
            <person name="Kimura S."/>
            <person name="Kitagawa M."/>
            <person name="Makino K."/>
            <person name="Masuda S."/>
            <person name="Miki T."/>
            <person name="Mizobuchi K."/>
            <person name="Mori H."/>
            <person name="Motomura K."/>
            <person name="Nakamura Y."/>
            <person name="Nashimoto H."/>
            <person name="Nishio Y."/>
            <person name="Saito N."/>
            <person name="Sampei G."/>
            <person name="Seki Y."/>
            <person name="Tagami H."/>
            <person name="Takemoto K."/>
            <person name="Wada C."/>
            <person name="Yamamoto Y."/>
            <person name="Yano M."/>
            <person name="Horiuchi T."/>
        </authorList>
    </citation>
    <scope>NUCLEOTIDE SEQUENCE [LARGE SCALE GENOMIC DNA]</scope>
    <source>
        <strain>K12 / W3110 / ATCC 27325 / DSM 5911</strain>
    </source>
</reference>
<reference key="5">
    <citation type="journal article" date="1997" name="Science">
        <title>The complete genome sequence of Escherichia coli K-12.</title>
        <authorList>
            <person name="Blattner F.R."/>
            <person name="Plunkett G. III"/>
            <person name="Bloch C.A."/>
            <person name="Perna N.T."/>
            <person name="Burland V."/>
            <person name="Riley M."/>
            <person name="Collado-Vides J."/>
            <person name="Glasner J.D."/>
            <person name="Rode C.K."/>
            <person name="Mayhew G.F."/>
            <person name="Gregor J."/>
            <person name="Davis N.W."/>
            <person name="Kirkpatrick H.A."/>
            <person name="Goeden M.A."/>
            <person name="Rose D.J."/>
            <person name="Mau B."/>
            <person name="Shao Y."/>
        </authorList>
    </citation>
    <scope>NUCLEOTIDE SEQUENCE [LARGE SCALE GENOMIC DNA]</scope>
    <source>
        <strain>K12 / MG1655 / ATCC 47076</strain>
    </source>
</reference>
<reference key="6">
    <citation type="journal article" date="2006" name="Mol. Syst. Biol.">
        <title>Highly accurate genome sequences of Escherichia coli K-12 strains MG1655 and W3110.</title>
        <authorList>
            <person name="Hayashi K."/>
            <person name="Morooka N."/>
            <person name="Yamamoto Y."/>
            <person name="Fujita K."/>
            <person name="Isono K."/>
            <person name="Choi S."/>
            <person name="Ohtsubo E."/>
            <person name="Baba T."/>
            <person name="Wanner B.L."/>
            <person name="Mori H."/>
            <person name="Horiuchi T."/>
        </authorList>
    </citation>
    <scope>NUCLEOTIDE SEQUENCE [LARGE SCALE GENOMIC DNA]</scope>
    <source>
        <strain>K12 / W3110 / ATCC 27325 / DSM 5911</strain>
    </source>
</reference>
<reference key="7">
    <citation type="journal article" date="1997" name="EMBO J.">
        <title>A novel outer membrane lipoprotein, LolB (HemM), involved in the LolA (p20)-dependent localization of lipoproteins to the outer membrane of Escherichia coli.</title>
        <authorList>
            <person name="Matsuyama S."/>
            <person name="Yokota N."/>
            <person name="Tokuda H."/>
        </authorList>
    </citation>
    <scope>CHARACTERIZATION</scope>
    <scope>DIACYLGLYCEROL AT CYS-22</scope>
    <scope>PALMITOYLATION AT CYS-22</scope>
    <scope>PARTIAL PROTEIN SEQUENCE</scope>
</reference>
<reference key="8">
    <citation type="journal article" date="2001" name="J. Bacteriol.">
        <title>Deletion of lolB, encoding an outer membrane lipoprotein, is lethal for Escherichia coli and causes accumulation of lipoprotein localization intermediates in the periplasm.</title>
        <authorList>
            <person name="Tanaka K."/>
            <person name="Matsuyama S."/>
            <person name="Tokuda H."/>
        </authorList>
    </citation>
    <scope>IMPORTANCE FOR VIABILITY</scope>
    <source>
        <strain>K12</strain>
    </source>
</reference>
<reference key="9">
    <citation type="journal article" date="2003" name="EMBO J.">
        <title>Crystal structures of bacterial lipoprotein localization factors, LolA and LolB.</title>
        <authorList>
            <person name="Takeda K."/>
            <person name="Miyatake H."/>
            <person name="Yokota N."/>
            <person name="Matsuyama S."/>
            <person name="Tokuda H."/>
            <person name="Miki K."/>
        </authorList>
    </citation>
    <scope>X-RAY CRYSTALLOGRAPHY (1.9 ANGSTROMS)</scope>
</reference>
<accession>P61320</accession>
<accession>P24208</accession>
<accession>Q46753</accession>
<evidence type="ECO:0000269" key="1">
    <source>
    </source>
</evidence>
<evidence type="ECO:0000305" key="2"/>
<evidence type="ECO:0000305" key="3">
    <source>
    </source>
</evidence>
<evidence type="ECO:0000305" key="4">
    <source>
    </source>
</evidence>
<evidence type="ECO:0007829" key="5">
    <source>
        <dbReference type="PDB" id="1IWM"/>
    </source>
</evidence>
<comment type="function">
    <text>Plays a critical role in the incorporation of lipoproteins in the outer membrane after they are released by the LolA protein. Essential for E.coli viability.</text>
</comment>
<comment type="subunit">
    <text>Monomer.</text>
</comment>
<comment type="interaction">
    <interactant intactId="EBI-1122794">
        <id>P61320</id>
    </interactant>
    <interactant intactId="EBI-553532">
        <id>P61316</id>
        <label>lolA</label>
    </interactant>
    <organismsDiffer>false</organismsDiffer>
    <experiments>2</experiments>
</comment>
<comment type="interaction">
    <interactant intactId="EBI-1122794">
        <id>P61320</id>
    </interactant>
    <interactant intactId="EBI-1124760">
        <id>P0A912</id>
        <label>pal</label>
    </interactant>
    <organismsDiffer>false</organismsDiffer>
    <experiments>2</experiments>
</comment>
<comment type="subcellular location">
    <subcellularLocation>
        <location>Cell outer membrane</location>
        <topology>Lipid-anchor</topology>
    </subcellularLocation>
</comment>
<comment type="similarity">
    <text evidence="2">Belongs to the LolB family.</text>
</comment>
<comment type="caution">
    <text evidence="3">Was originally thought to be involved in delta-aminolevulinic acid biosynthesis.</text>
</comment>
<name>LOLB_ECOLI</name>
<proteinExistence type="evidence at protein level"/>
<keyword id="KW-0002">3D-structure</keyword>
<keyword id="KW-0998">Cell outer membrane</keyword>
<keyword id="KW-0143">Chaperone</keyword>
<keyword id="KW-0903">Direct protein sequencing</keyword>
<keyword id="KW-0449">Lipoprotein</keyword>
<keyword id="KW-0472">Membrane</keyword>
<keyword id="KW-0564">Palmitate</keyword>
<keyword id="KW-0653">Protein transport</keyword>
<keyword id="KW-1185">Reference proteome</keyword>
<keyword id="KW-0732">Signal</keyword>
<keyword id="KW-0813">Transport</keyword>
<sequence length="207" mass="23551">MPLPDFRLIRLLPLAALVLTACSVTTPKGPGKSPDSPQWRQHQQDVRNLNQYQTRGAFAYISDQQKVYARFFWQQTGQDRYRLLLTNPLGSTELELNAQPGNVQLVDNKGQRYTADDAEEMIGKLTGMPIPLNSLRQWILGLPGDATDYKLDDQYRLSEITYSQNGKNWKVVYGGYDTKTQPAMPANMELTDGGQRIKLKMDNWIVK</sequence>